<feature type="initiator methionine" description="Removed" evidence="2">
    <location>
        <position position="1"/>
    </location>
</feature>
<feature type="chain" id="PRO_0000410802" description="Eisosome protein 1">
    <location>
        <begin position="2"/>
        <end position="843"/>
    </location>
</feature>
<feature type="region of interest" description="Disordered" evidence="3">
    <location>
        <begin position="13"/>
        <end position="44"/>
    </location>
</feature>
<feature type="region of interest" description="Disordered" evidence="3">
    <location>
        <begin position="120"/>
        <end position="174"/>
    </location>
</feature>
<feature type="region of interest" description="Disordered" evidence="3">
    <location>
        <begin position="717"/>
        <end position="843"/>
    </location>
</feature>
<feature type="compositionally biased region" description="Basic residues" evidence="3">
    <location>
        <begin position="33"/>
        <end position="44"/>
    </location>
</feature>
<feature type="compositionally biased region" description="Polar residues" evidence="3">
    <location>
        <begin position="127"/>
        <end position="137"/>
    </location>
</feature>
<feature type="compositionally biased region" description="Polar residues" evidence="3">
    <location>
        <begin position="163"/>
        <end position="174"/>
    </location>
</feature>
<feature type="compositionally biased region" description="Low complexity" evidence="3">
    <location>
        <begin position="752"/>
        <end position="764"/>
    </location>
</feature>
<feature type="compositionally biased region" description="Basic and acidic residues" evidence="3">
    <location>
        <begin position="781"/>
        <end position="797"/>
    </location>
</feature>
<feature type="compositionally biased region" description="Polar residues" evidence="3">
    <location>
        <begin position="798"/>
        <end position="810"/>
    </location>
</feature>
<feature type="modified residue" description="N-acetylserine" evidence="2">
    <location>
        <position position="2"/>
    </location>
</feature>
<feature type="modified residue" description="Phosphoserine" evidence="2">
    <location>
        <position position="2"/>
    </location>
</feature>
<feature type="modified residue" description="Phosphoserine" evidence="2">
    <location>
        <position position="88"/>
    </location>
</feature>
<feature type="modified residue" description="Phosphoserine" evidence="2">
    <location>
        <position position="130"/>
    </location>
</feature>
<feature type="modified residue" description="Phosphoserine" evidence="2">
    <location>
        <position position="182"/>
    </location>
</feature>
<feature type="modified residue" description="Phosphoserine" evidence="2">
    <location>
        <position position="401"/>
    </location>
</feature>
<feature type="modified residue" description="Phosphoserine" evidence="2">
    <location>
        <position position="584"/>
    </location>
</feature>
<feature type="modified residue" description="Phosphoserine" evidence="2">
    <location>
        <position position="710"/>
    </location>
</feature>
<feature type="modified residue" description="Phosphothreonine" evidence="2">
    <location>
        <position position="720"/>
    </location>
</feature>
<feature type="modified residue" description="Phosphoserine" evidence="2">
    <location>
        <position position="763"/>
    </location>
</feature>
<feature type="modified residue" description="Phosphoserine" evidence="2">
    <location>
        <position position="775"/>
    </location>
</feature>
<feature type="modified residue" description="Phosphoserine" evidence="2">
    <location>
        <position position="816"/>
    </location>
</feature>
<feature type="modified residue" description="Phosphoserine" evidence="2">
    <location>
        <position position="828"/>
    </location>
</feature>
<feature type="modified residue" description="Phosphoserine" evidence="2">
    <location>
        <position position="829"/>
    </location>
</feature>
<feature type="modified residue" description="Phosphoserine" evidence="2">
    <location>
        <position position="838"/>
    </location>
</feature>
<gene>
    <name type="primary">EIS1</name>
    <name type="ORF">SCRG_01927</name>
</gene>
<name>EIS1_YEAS1</name>
<dbReference type="EMBL" id="CH408047">
    <property type="protein sequence ID" value="EDV11532.1"/>
    <property type="molecule type" value="Genomic_DNA"/>
</dbReference>
<dbReference type="SMR" id="B3LLS9"/>
<dbReference type="HOGENOM" id="CLU_013228_0_0_1"/>
<dbReference type="OrthoDB" id="24780at4893"/>
<dbReference type="Proteomes" id="UP000008335">
    <property type="component" value="Unassembled WGS sequence"/>
</dbReference>
<dbReference type="GO" id="GO:0005886">
    <property type="term" value="C:plasma membrane"/>
    <property type="evidence" value="ECO:0007669"/>
    <property type="project" value="UniProtKB-SubCell"/>
</dbReference>
<dbReference type="GO" id="GO:0070941">
    <property type="term" value="P:eisosome assembly"/>
    <property type="evidence" value="ECO:0007669"/>
    <property type="project" value="TreeGrafter"/>
</dbReference>
<dbReference type="InterPro" id="IPR024527">
    <property type="entry name" value="Eisosome1"/>
</dbReference>
<dbReference type="PANTHER" id="PTHR28298">
    <property type="entry name" value="EISOSOME PROTEIN 1"/>
    <property type="match status" value="1"/>
</dbReference>
<dbReference type="PANTHER" id="PTHR28298:SF1">
    <property type="entry name" value="EISOSOME PROTEIN 1"/>
    <property type="match status" value="1"/>
</dbReference>
<dbReference type="Pfam" id="PF12757">
    <property type="entry name" value="Eisosome1"/>
    <property type="match status" value="1"/>
</dbReference>
<evidence type="ECO:0000250" key="1"/>
<evidence type="ECO:0000250" key="2">
    <source>
        <dbReference type="UniProtKB" id="Q05050"/>
    </source>
</evidence>
<evidence type="ECO:0000256" key="3">
    <source>
        <dbReference type="SAM" id="MobiDB-lite"/>
    </source>
</evidence>
<evidence type="ECO:0000305" key="4"/>
<sequence>MSLISAVEDRDIHNIGKTSGGGSRTSSITSSKKSLKHGSKSLRKPKVYQTTGELLSREALYKAKLKYGVYQSPAQSYSIGVSDAHAASDKAANLAHDNQTTVEAYKRMFIDPNATKAASKMGPKVVRNNSITSATSKTSKESQTKRKSKESPGAAASKAYSMTMETTSLSSQTNSRSYSITSASSVLSGASGSFNSTVNPKPKTLNLEKVLVGAEKKAESRIKERWEPEKTNFQYGVKTDEHGNLNQFSFSNEMMNNIMAKVDAPKAQDLQKVKKVSAEKEAKSMKFALGAANAVKDMHPGEDIDKSIALKAQKRETYLSQLTSQQVLTLARANVDRQLDIIEKSDMHRKLFTNMEYNKAAVAVAQSNHQKKTEFHNKINMGGGLFLSPEDITKIASGLISPVLGEVSERAEAQRAMDEEIAERTEAYNKSLNEWETMERSIISNDAKVLTTTANRHQTEKKTSQEKIKASFDALVARMDTKVAERETLLEDTKSKEIEFKKQMQQELKDEKARLDQDLEEWGKKCEQDITEARKEQEELLKPYHDDLANAEAEHKTLVEERDEINAEISRLQDAIVDHKRKISGYGNDLDAQKNRNIREDDKLLELGQTKESLESHLNDDVIILANKAKEQAELSTKEARLKQLEVDSLINERKSELNATEIELKKEKLNLLEAMKDVASARGDDKIDEEKVKKLIGMTSEEYLTQNKSVEKNVEDLPTQLEKIEEGDELKKEEIVGAETKNSGGDGVPVSTAAKEATETSSAVQTKEPEEKISIGNKSSGKEDANDCKSAEHSKEISVSQKAGNNKSLGVSPDSLEHTFSGFSQGSSIEDDQDAISNQEKK</sequence>
<comment type="function">
    <text evidence="1">Required for normal formation of eisosomes, large cytoplasmic protein assemblies that localize to specialized domains on plasma membrane and mark the site of endocytosis.</text>
</comment>
<comment type="subcellular location">
    <subcellularLocation>
        <location evidence="1">Cytoplasmic granule</location>
    </subcellularLocation>
    <subcellularLocation>
        <location evidence="1">Cell membrane</location>
        <topology evidence="1">Peripheral membrane protein</topology>
        <orientation evidence="1">Cytoplasmic side</orientation>
    </subcellularLocation>
    <text evidence="1">Localizes at the eisosomes.</text>
</comment>
<comment type="similarity">
    <text evidence="4">Belongs to the EIS1 family.</text>
</comment>
<accession>B3LLS9</accession>
<reference key="1">
    <citation type="submission" date="2005-03" db="EMBL/GenBank/DDBJ databases">
        <title>Annotation of the Saccharomyces cerevisiae RM11-1a genome.</title>
        <authorList>
            <consortium name="The Broad Institute Genome Sequencing Platform"/>
            <person name="Birren B.W."/>
            <person name="Lander E.S."/>
            <person name="Galagan J.E."/>
            <person name="Nusbaum C."/>
            <person name="Devon K."/>
            <person name="Cuomo C."/>
            <person name="Jaffe D.B."/>
            <person name="Butler J."/>
            <person name="Alvarez P."/>
            <person name="Gnerre S."/>
            <person name="Grabherr M."/>
            <person name="Kleber M."/>
            <person name="Mauceli E.W."/>
            <person name="Brockman W."/>
            <person name="MacCallum I.A."/>
            <person name="Rounsley S."/>
            <person name="Young S.K."/>
            <person name="LaButti K."/>
            <person name="Pushparaj V."/>
            <person name="DeCaprio D."/>
            <person name="Crawford M."/>
            <person name="Koehrsen M."/>
            <person name="Engels R."/>
            <person name="Montgomery P."/>
            <person name="Pearson M."/>
            <person name="Howarth C."/>
            <person name="Larson L."/>
            <person name="Luoma S."/>
            <person name="White J."/>
            <person name="O'Leary S."/>
            <person name="Kodira C.D."/>
            <person name="Zeng Q."/>
            <person name="Yandava C."/>
            <person name="Alvarado L."/>
            <person name="Pratt S."/>
            <person name="Kruglyak L."/>
        </authorList>
    </citation>
    <scope>NUCLEOTIDE SEQUENCE [LARGE SCALE GENOMIC DNA]</scope>
    <source>
        <strain>RM11-1a</strain>
    </source>
</reference>
<protein>
    <recommendedName>
        <fullName>Eisosome protein 1</fullName>
    </recommendedName>
</protein>
<organism>
    <name type="scientific">Saccharomyces cerevisiae (strain RM11-1a)</name>
    <name type="common">Baker's yeast</name>
    <dbReference type="NCBI Taxonomy" id="285006"/>
    <lineage>
        <taxon>Eukaryota</taxon>
        <taxon>Fungi</taxon>
        <taxon>Dikarya</taxon>
        <taxon>Ascomycota</taxon>
        <taxon>Saccharomycotina</taxon>
        <taxon>Saccharomycetes</taxon>
        <taxon>Saccharomycetales</taxon>
        <taxon>Saccharomycetaceae</taxon>
        <taxon>Saccharomyces</taxon>
    </lineage>
</organism>
<keyword id="KW-0007">Acetylation</keyword>
<keyword id="KW-1003">Cell membrane</keyword>
<keyword id="KW-0472">Membrane</keyword>
<keyword id="KW-0597">Phosphoprotein</keyword>
<proteinExistence type="inferred from homology"/>